<sequence>MTLQEEIIRQLGVKASIDPKEEIRKTVDFLKAYLRKHSFLKTYVLGISGGQDSTLAGKLAQMAIAELREETGDQAYQFIAVRLPYGVQADEADAQKALAFIAPDQTLTINIKAAVDGQVEALQAAGVEISDFNKGNIKARQRMISQYAIAGQMAGAVIGTDHAAENITGFFTKFGDGGADILPLFRLNKRQGKALLKVLGADAALYEKVPTADLEDQKPGLADEVALGVTYQDIDDYLEGKLISKVAQATIEKWWHKGQHKRHLPITIFDDFWK</sequence>
<protein>
    <recommendedName>
        <fullName evidence="1">NH(3)-dependent NAD(+) synthetase</fullName>
        <ecNumber evidence="1">6.3.1.5</ecNumber>
    </recommendedName>
</protein>
<organism>
    <name type="scientific">Streptococcus pyogenes serotype M5 (strain Manfredo)</name>
    <dbReference type="NCBI Taxonomy" id="160491"/>
    <lineage>
        <taxon>Bacteria</taxon>
        <taxon>Bacillati</taxon>
        <taxon>Bacillota</taxon>
        <taxon>Bacilli</taxon>
        <taxon>Lactobacillales</taxon>
        <taxon>Streptococcaceae</taxon>
        <taxon>Streptococcus</taxon>
    </lineage>
</organism>
<evidence type="ECO:0000255" key="1">
    <source>
        <dbReference type="HAMAP-Rule" id="MF_00193"/>
    </source>
</evidence>
<dbReference type="EC" id="6.3.1.5" evidence="1"/>
<dbReference type="EMBL" id="AM295007">
    <property type="protein sequence ID" value="CAM29776.1"/>
    <property type="molecule type" value="Genomic_DNA"/>
</dbReference>
<dbReference type="RefSeq" id="WP_011888661.1">
    <property type="nucleotide sequence ID" value="NC_009332.1"/>
</dbReference>
<dbReference type="SMR" id="A2RD51"/>
<dbReference type="KEGG" id="spf:SpyM50434"/>
<dbReference type="HOGENOM" id="CLU_059327_3_0_9"/>
<dbReference type="UniPathway" id="UPA00253">
    <property type="reaction ID" value="UER00333"/>
</dbReference>
<dbReference type="GO" id="GO:0005737">
    <property type="term" value="C:cytoplasm"/>
    <property type="evidence" value="ECO:0007669"/>
    <property type="project" value="InterPro"/>
</dbReference>
<dbReference type="GO" id="GO:0005524">
    <property type="term" value="F:ATP binding"/>
    <property type="evidence" value="ECO:0007669"/>
    <property type="project" value="UniProtKB-UniRule"/>
</dbReference>
<dbReference type="GO" id="GO:0004359">
    <property type="term" value="F:glutaminase activity"/>
    <property type="evidence" value="ECO:0007669"/>
    <property type="project" value="InterPro"/>
</dbReference>
<dbReference type="GO" id="GO:0046872">
    <property type="term" value="F:metal ion binding"/>
    <property type="evidence" value="ECO:0007669"/>
    <property type="project" value="UniProtKB-KW"/>
</dbReference>
<dbReference type="GO" id="GO:0003952">
    <property type="term" value="F:NAD+ synthase (glutamine-hydrolyzing) activity"/>
    <property type="evidence" value="ECO:0007669"/>
    <property type="project" value="InterPro"/>
</dbReference>
<dbReference type="GO" id="GO:0008795">
    <property type="term" value="F:NAD+ synthase activity"/>
    <property type="evidence" value="ECO:0007669"/>
    <property type="project" value="UniProtKB-UniRule"/>
</dbReference>
<dbReference type="GO" id="GO:0009435">
    <property type="term" value="P:NAD biosynthetic process"/>
    <property type="evidence" value="ECO:0007669"/>
    <property type="project" value="UniProtKB-UniRule"/>
</dbReference>
<dbReference type="CDD" id="cd00553">
    <property type="entry name" value="NAD_synthase"/>
    <property type="match status" value="1"/>
</dbReference>
<dbReference type="FunFam" id="3.40.50.620:FF:000015">
    <property type="entry name" value="NH(3)-dependent NAD(+) synthetase"/>
    <property type="match status" value="1"/>
</dbReference>
<dbReference type="Gene3D" id="3.40.50.620">
    <property type="entry name" value="HUPs"/>
    <property type="match status" value="1"/>
</dbReference>
<dbReference type="HAMAP" id="MF_00193">
    <property type="entry name" value="NadE_ammonia_dep"/>
    <property type="match status" value="1"/>
</dbReference>
<dbReference type="InterPro" id="IPR022310">
    <property type="entry name" value="NAD/GMP_synthase"/>
</dbReference>
<dbReference type="InterPro" id="IPR003694">
    <property type="entry name" value="NAD_synthase"/>
</dbReference>
<dbReference type="InterPro" id="IPR022926">
    <property type="entry name" value="NH(3)-dep_NAD(+)_synth"/>
</dbReference>
<dbReference type="InterPro" id="IPR014729">
    <property type="entry name" value="Rossmann-like_a/b/a_fold"/>
</dbReference>
<dbReference type="NCBIfam" id="TIGR00552">
    <property type="entry name" value="nadE"/>
    <property type="match status" value="1"/>
</dbReference>
<dbReference type="NCBIfam" id="NF001979">
    <property type="entry name" value="PRK00768.1"/>
    <property type="match status" value="1"/>
</dbReference>
<dbReference type="PANTHER" id="PTHR23090">
    <property type="entry name" value="NH 3 /GLUTAMINE-DEPENDENT NAD + SYNTHETASE"/>
    <property type="match status" value="1"/>
</dbReference>
<dbReference type="PANTHER" id="PTHR23090:SF7">
    <property type="entry name" value="NH(3)-DEPENDENT NAD(+) SYNTHETASE"/>
    <property type="match status" value="1"/>
</dbReference>
<dbReference type="Pfam" id="PF02540">
    <property type="entry name" value="NAD_synthase"/>
    <property type="match status" value="1"/>
</dbReference>
<dbReference type="SUPFAM" id="SSF52402">
    <property type="entry name" value="Adenine nucleotide alpha hydrolases-like"/>
    <property type="match status" value="1"/>
</dbReference>
<proteinExistence type="inferred from homology"/>
<reference key="1">
    <citation type="journal article" date="2007" name="J. Bacteriol.">
        <title>Complete genome of acute rheumatic fever-associated serotype M5 Streptococcus pyogenes strain Manfredo.</title>
        <authorList>
            <person name="Holden M.T.G."/>
            <person name="Scott A."/>
            <person name="Cherevach I."/>
            <person name="Chillingworth T."/>
            <person name="Churcher C."/>
            <person name="Cronin A."/>
            <person name="Dowd L."/>
            <person name="Feltwell T."/>
            <person name="Hamlin N."/>
            <person name="Holroyd S."/>
            <person name="Jagels K."/>
            <person name="Moule S."/>
            <person name="Mungall K."/>
            <person name="Quail M.A."/>
            <person name="Price C."/>
            <person name="Rabbinowitsch E."/>
            <person name="Sharp S."/>
            <person name="Skelton J."/>
            <person name="Whitehead S."/>
            <person name="Barrell B.G."/>
            <person name="Kehoe M."/>
            <person name="Parkhill J."/>
        </authorList>
    </citation>
    <scope>NUCLEOTIDE SEQUENCE [LARGE SCALE GENOMIC DNA]</scope>
    <source>
        <strain>Manfredo</strain>
    </source>
</reference>
<comment type="function">
    <text evidence="1">Catalyzes the ATP-dependent amidation of deamido-NAD to form NAD. Uses ammonia as a nitrogen source.</text>
</comment>
<comment type="catalytic activity">
    <reaction evidence="1">
        <text>deamido-NAD(+) + NH4(+) + ATP = AMP + diphosphate + NAD(+) + H(+)</text>
        <dbReference type="Rhea" id="RHEA:21188"/>
        <dbReference type="ChEBI" id="CHEBI:15378"/>
        <dbReference type="ChEBI" id="CHEBI:28938"/>
        <dbReference type="ChEBI" id="CHEBI:30616"/>
        <dbReference type="ChEBI" id="CHEBI:33019"/>
        <dbReference type="ChEBI" id="CHEBI:57540"/>
        <dbReference type="ChEBI" id="CHEBI:58437"/>
        <dbReference type="ChEBI" id="CHEBI:456215"/>
        <dbReference type="EC" id="6.3.1.5"/>
    </reaction>
</comment>
<comment type="pathway">
    <text evidence="1">Cofactor biosynthesis; NAD(+) biosynthesis; NAD(+) from deamido-NAD(+) (ammonia route): step 1/1.</text>
</comment>
<comment type="subunit">
    <text evidence="1">Homodimer.</text>
</comment>
<comment type="similarity">
    <text evidence="1">Belongs to the NAD synthetase family.</text>
</comment>
<keyword id="KW-0067">ATP-binding</keyword>
<keyword id="KW-0436">Ligase</keyword>
<keyword id="KW-0460">Magnesium</keyword>
<keyword id="KW-0479">Metal-binding</keyword>
<keyword id="KW-0520">NAD</keyword>
<keyword id="KW-0547">Nucleotide-binding</keyword>
<feature type="chain" id="PRO_1000077627" description="NH(3)-dependent NAD(+) synthetase">
    <location>
        <begin position="1"/>
        <end position="274"/>
    </location>
</feature>
<feature type="binding site" evidence="1">
    <location>
        <begin position="46"/>
        <end position="53"/>
    </location>
    <ligand>
        <name>ATP</name>
        <dbReference type="ChEBI" id="CHEBI:30616"/>
    </ligand>
</feature>
<feature type="binding site" evidence="1">
    <location>
        <position position="52"/>
    </location>
    <ligand>
        <name>Mg(2+)</name>
        <dbReference type="ChEBI" id="CHEBI:18420"/>
    </ligand>
</feature>
<feature type="binding site" evidence="1">
    <location>
        <position position="140"/>
    </location>
    <ligand>
        <name>deamido-NAD(+)</name>
        <dbReference type="ChEBI" id="CHEBI:58437"/>
    </ligand>
</feature>
<feature type="binding site" evidence="1">
    <location>
        <position position="160"/>
    </location>
    <ligand>
        <name>ATP</name>
        <dbReference type="ChEBI" id="CHEBI:30616"/>
    </ligand>
</feature>
<feature type="binding site" evidence="1">
    <location>
        <position position="165"/>
    </location>
    <ligand>
        <name>Mg(2+)</name>
        <dbReference type="ChEBI" id="CHEBI:18420"/>
    </ligand>
</feature>
<feature type="binding site" evidence="1">
    <location>
        <position position="173"/>
    </location>
    <ligand>
        <name>deamido-NAD(+)</name>
        <dbReference type="ChEBI" id="CHEBI:58437"/>
    </ligand>
</feature>
<feature type="binding site" evidence="1">
    <location>
        <position position="180"/>
    </location>
    <ligand>
        <name>deamido-NAD(+)</name>
        <dbReference type="ChEBI" id="CHEBI:58437"/>
    </ligand>
</feature>
<feature type="binding site" evidence="1">
    <location>
        <position position="189"/>
    </location>
    <ligand>
        <name>ATP</name>
        <dbReference type="ChEBI" id="CHEBI:30616"/>
    </ligand>
</feature>
<feature type="binding site" evidence="1">
    <location>
        <position position="211"/>
    </location>
    <ligand>
        <name>ATP</name>
        <dbReference type="ChEBI" id="CHEBI:30616"/>
    </ligand>
</feature>
<feature type="binding site" evidence="1">
    <location>
        <begin position="260"/>
        <end position="261"/>
    </location>
    <ligand>
        <name>deamido-NAD(+)</name>
        <dbReference type="ChEBI" id="CHEBI:58437"/>
    </ligand>
</feature>
<accession>A2RD51</accession>
<gene>
    <name evidence="1" type="primary">nadE</name>
    <name type="ordered locus">SpyM50434</name>
</gene>
<name>NADE_STRPG</name>